<keyword id="KW-0456">Lyase</keyword>
<keyword id="KW-1185">Reference proteome</keyword>
<accession>B2WIX9</accession>
<evidence type="ECO:0000255" key="1">
    <source>
        <dbReference type="HAMAP-Rule" id="MF_03139"/>
    </source>
</evidence>
<evidence type="ECO:0000305" key="2"/>
<feature type="chain" id="PRO_0000403265" description="Cyanate hydratase">
    <location>
        <begin position="1"/>
        <end position="162"/>
    </location>
</feature>
<feature type="active site" evidence="1">
    <location>
        <position position="103"/>
    </location>
</feature>
<feature type="active site" evidence="1">
    <location>
        <position position="106"/>
    </location>
</feature>
<feature type="active site" evidence="1">
    <location>
        <position position="129"/>
    </location>
</feature>
<reference key="1">
    <citation type="journal article" date="2013" name="G3 (Bethesda)">
        <title>Comparative genomics of a plant-pathogenic fungus, Pyrenophora tritici-repentis, reveals transduplication and the impact of repeat elements on pathogenicity and population divergence.</title>
        <authorList>
            <person name="Manning V.A."/>
            <person name="Pandelova I."/>
            <person name="Dhillon B."/>
            <person name="Wilhelm L.J."/>
            <person name="Goodwin S.B."/>
            <person name="Berlin A.M."/>
            <person name="Figueroa M."/>
            <person name="Freitag M."/>
            <person name="Hane J.K."/>
            <person name="Henrissat B."/>
            <person name="Holman W.H."/>
            <person name="Kodira C.D."/>
            <person name="Martin J."/>
            <person name="Oliver R.P."/>
            <person name="Robbertse B."/>
            <person name="Schackwitz W."/>
            <person name="Schwartz D.C."/>
            <person name="Spatafora J.W."/>
            <person name="Turgeon B.G."/>
            <person name="Yandava C."/>
            <person name="Young S."/>
            <person name="Zhou S."/>
            <person name="Zeng Q."/>
            <person name="Grigoriev I.V."/>
            <person name="Ma L.-J."/>
            <person name="Ciuffetti L.M."/>
        </authorList>
    </citation>
    <scope>NUCLEOTIDE SEQUENCE [LARGE SCALE GENOMIC DNA]</scope>
    <source>
        <strain>Pt-1C-BFP</strain>
    </source>
</reference>
<protein>
    <recommendedName>
        <fullName evidence="1">Cyanate hydratase</fullName>
        <shortName evidence="1">Cyanase</shortName>
        <ecNumber evidence="1">4.2.1.104</ecNumber>
    </recommendedName>
    <alternativeName>
        <fullName evidence="1">Cyanate hydrolase</fullName>
    </alternativeName>
    <alternativeName>
        <fullName evidence="1">Cyanate lyase</fullName>
    </alternativeName>
</protein>
<proteinExistence type="inferred from homology"/>
<comment type="function">
    <text evidence="1">Catalyzes the reaction of cyanate with bicarbonate to produce ammonia and carbon dioxide.</text>
</comment>
<comment type="catalytic activity">
    <reaction evidence="1">
        <text>cyanate + hydrogencarbonate + 3 H(+) = NH4(+) + 2 CO2</text>
        <dbReference type="Rhea" id="RHEA:11120"/>
        <dbReference type="ChEBI" id="CHEBI:15378"/>
        <dbReference type="ChEBI" id="CHEBI:16526"/>
        <dbReference type="ChEBI" id="CHEBI:17544"/>
        <dbReference type="ChEBI" id="CHEBI:28938"/>
        <dbReference type="ChEBI" id="CHEBI:29195"/>
        <dbReference type="EC" id="4.2.1.104"/>
    </reaction>
</comment>
<comment type="similarity">
    <text evidence="1">Belongs to the cyanase family.</text>
</comment>
<comment type="sequence caution" evidence="2">
    <conflict type="erroneous initiation">
        <sequence resource="EMBL-CDS" id="EDU42989"/>
    </conflict>
    <text>Extended N-terminus.</text>
</comment>
<dbReference type="EC" id="4.2.1.104" evidence="1"/>
<dbReference type="EMBL" id="DS231626">
    <property type="protein sequence ID" value="EDU42989.1"/>
    <property type="status" value="ALT_INIT"/>
    <property type="molecule type" value="Genomic_DNA"/>
</dbReference>
<dbReference type="RefSeq" id="XP_001940270.1">
    <property type="nucleotide sequence ID" value="XM_001940235.1"/>
</dbReference>
<dbReference type="SMR" id="B2WIX9"/>
<dbReference type="STRING" id="426418.B2WIX9"/>
<dbReference type="GeneID" id="6348236"/>
<dbReference type="KEGG" id="ptrr:6348236"/>
<dbReference type="eggNOG" id="ENOG502S3YJ">
    <property type="taxonomic scope" value="Eukaryota"/>
</dbReference>
<dbReference type="InParanoid" id="B2WIX9"/>
<dbReference type="OrthoDB" id="3721at28556"/>
<dbReference type="Proteomes" id="UP000001471">
    <property type="component" value="Unassembled WGS sequence"/>
</dbReference>
<dbReference type="GO" id="GO:0008824">
    <property type="term" value="F:cyanate hydratase activity"/>
    <property type="evidence" value="ECO:0007669"/>
    <property type="project" value="UniProtKB-UniRule"/>
</dbReference>
<dbReference type="GO" id="GO:0003677">
    <property type="term" value="F:DNA binding"/>
    <property type="evidence" value="ECO:0007669"/>
    <property type="project" value="InterPro"/>
</dbReference>
<dbReference type="GO" id="GO:0009439">
    <property type="term" value="P:cyanate metabolic process"/>
    <property type="evidence" value="ECO:0007669"/>
    <property type="project" value="UniProtKB-UniRule"/>
</dbReference>
<dbReference type="CDD" id="cd00559">
    <property type="entry name" value="Cyanase_C"/>
    <property type="match status" value="1"/>
</dbReference>
<dbReference type="Gene3D" id="3.30.1160.10">
    <property type="entry name" value="Cyanate lyase, C-terminal domain"/>
    <property type="match status" value="1"/>
</dbReference>
<dbReference type="Gene3D" id="1.10.260.40">
    <property type="entry name" value="lambda repressor-like DNA-binding domains"/>
    <property type="match status" value="1"/>
</dbReference>
<dbReference type="HAMAP" id="MF_00535">
    <property type="entry name" value="Cyanate_hydrat"/>
    <property type="match status" value="1"/>
</dbReference>
<dbReference type="InterPro" id="IPR001387">
    <property type="entry name" value="Cro/C1-type_HTH"/>
</dbReference>
<dbReference type="InterPro" id="IPR008076">
    <property type="entry name" value="Cyanase"/>
</dbReference>
<dbReference type="InterPro" id="IPR003712">
    <property type="entry name" value="Cyanate_lyase_C"/>
</dbReference>
<dbReference type="InterPro" id="IPR036581">
    <property type="entry name" value="Cyanate_lyase_C_sf"/>
</dbReference>
<dbReference type="InterPro" id="IPR010982">
    <property type="entry name" value="Lambda_DNA-bd_dom_sf"/>
</dbReference>
<dbReference type="NCBIfam" id="TIGR00673">
    <property type="entry name" value="cynS"/>
    <property type="match status" value="1"/>
</dbReference>
<dbReference type="NCBIfam" id="NF002773">
    <property type="entry name" value="PRK02866.1"/>
    <property type="match status" value="1"/>
</dbReference>
<dbReference type="PANTHER" id="PTHR34186">
    <property type="entry name" value="CYANATE HYDRATASE"/>
    <property type="match status" value="1"/>
</dbReference>
<dbReference type="PANTHER" id="PTHR34186:SF2">
    <property type="entry name" value="CYANATE HYDRATASE"/>
    <property type="match status" value="1"/>
</dbReference>
<dbReference type="Pfam" id="PF02560">
    <property type="entry name" value="Cyanate_lyase"/>
    <property type="match status" value="1"/>
</dbReference>
<dbReference type="PIRSF" id="PIRSF001263">
    <property type="entry name" value="Cyanate_hydratas"/>
    <property type="match status" value="1"/>
</dbReference>
<dbReference type="PRINTS" id="PR01693">
    <property type="entry name" value="CYANASE"/>
</dbReference>
<dbReference type="SMART" id="SM01116">
    <property type="entry name" value="Cyanate_lyase"/>
    <property type="match status" value="1"/>
</dbReference>
<dbReference type="SUPFAM" id="SSF55234">
    <property type="entry name" value="Cyanase C-terminal domain"/>
    <property type="match status" value="1"/>
</dbReference>
<dbReference type="SUPFAM" id="SSF47413">
    <property type="entry name" value="lambda repressor-like DNA-binding domains"/>
    <property type="match status" value="1"/>
</dbReference>
<sequence>MAQHPIATLNEELVPRLPPSSPTLFEAKKKKNLSFEAIAKHVGRDEVAIAALFYGQAMASAQDIKKLSEILDIDAGMLESQLSGFPNRGSTLDMPPKDPTIYRLYEIVQNYGQAYKAVLHEKFGDGIMSAISFSTKIEKETDDKGEWAKITLRGKWLPYSRF</sequence>
<gene>
    <name evidence="1" type="primary">cyn1</name>
    <name type="ORF">PTRG_09938</name>
</gene>
<organism>
    <name type="scientific">Pyrenophora tritici-repentis (strain Pt-1C-BFP)</name>
    <name type="common">Wheat tan spot fungus</name>
    <name type="synonym">Drechslera tritici-repentis</name>
    <dbReference type="NCBI Taxonomy" id="426418"/>
    <lineage>
        <taxon>Eukaryota</taxon>
        <taxon>Fungi</taxon>
        <taxon>Dikarya</taxon>
        <taxon>Ascomycota</taxon>
        <taxon>Pezizomycotina</taxon>
        <taxon>Dothideomycetes</taxon>
        <taxon>Pleosporomycetidae</taxon>
        <taxon>Pleosporales</taxon>
        <taxon>Pleosporineae</taxon>
        <taxon>Pleosporaceae</taxon>
        <taxon>Pyrenophora</taxon>
    </lineage>
</organism>
<name>CYNS_PYRTR</name>